<feature type="chain" id="PRO_0000389790" description="Acetyl-coenzyme A carboxylase carboxyl transferase subunit beta">
    <location>
        <begin position="1"/>
        <end position="311"/>
    </location>
</feature>
<feature type="domain" description="CoA carboxyltransferase N-terminal" evidence="2">
    <location>
        <begin position="32"/>
        <end position="299"/>
    </location>
</feature>
<feature type="region of interest" description="Disordered" evidence="3">
    <location>
        <begin position="291"/>
        <end position="311"/>
    </location>
</feature>
<reference key="1">
    <citation type="submission" date="2006-08" db="EMBL/GenBank/DDBJ databases">
        <title>Complete sequence of Maricaulis maris MCS10.</title>
        <authorList>
            <consortium name="US DOE Joint Genome Institute"/>
            <person name="Copeland A."/>
            <person name="Lucas S."/>
            <person name="Lapidus A."/>
            <person name="Barry K."/>
            <person name="Detter J.C."/>
            <person name="Glavina del Rio T."/>
            <person name="Hammon N."/>
            <person name="Israni S."/>
            <person name="Dalin E."/>
            <person name="Tice H."/>
            <person name="Pitluck S."/>
            <person name="Saunders E."/>
            <person name="Brettin T."/>
            <person name="Bruce D."/>
            <person name="Han C."/>
            <person name="Tapia R."/>
            <person name="Gilna P."/>
            <person name="Schmutz J."/>
            <person name="Larimer F."/>
            <person name="Land M."/>
            <person name="Hauser L."/>
            <person name="Kyrpides N."/>
            <person name="Mikhailova N."/>
            <person name="Viollier P."/>
            <person name="Stephens C."/>
            <person name="Richardson P."/>
        </authorList>
    </citation>
    <scope>NUCLEOTIDE SEQUENCE [LARGE SCALE GENOMIC DNA]</scope>
    <source>
        <strain>MCS10</strain>
    </source>
</reference>
<accession>Q0ATK2</accession>
<name>ACCD_MARMM</name>
<sequence length="311" mass="33520">MTEKSNGMSWLSKITPPGMSKIFSKRDTPDNLWVKCPVSEEMVFHKDLEAGLFVTPAGHHMRIAPAYRFQFTFDGDYTEIETPEVVKDPLKFRDDKPYTAKLAAARKKTGRDDSMAIATGTIGGLDAVVLVQNFAFMGGSLGMAAGESFIKAAETALARKAPMIVFTAAGGARMQEGALSLMQMPRTTLAVEMLREAGLPYIVVLTDPTTGGVTASYAMLGDVHIAEPGALIGFAGPRVIEQTIREKLPEGFQRAEYLLEKGMVDKVVHRADIPATLARMLRVLMKKPGTSMPAALTPPAPDHVVADGGSH</sequence>
<organism>
    <name type="scientific">Maricaulis maris (strain MCS10)</name>
    <name type="common">Caulobacter maris</name>
    <dbReference type="NCBI Taxonomy" id="394221"/>
    <lineage>
        <taxon>Bacteria</taxon>
        <taxon>Pseudomonadati</taxon>
        <taxon>Pseudomonadota</taxon>
        <taxon>Alphaproteobacteria</taxon>
        <taxon>Maricaulales</taxon>
        <taxon>Maricaulaceae</taxon>
        <taxon>Maricaulis</taxon>
    </lineage>
</organism>
<comment type="function">
    <text evidence="1">Component of the acetyl coenzyme A carboxylase (ACC) complex. Biotin carboxylase (BC) catalyzes the carboxylation of biotin on its carrier protein (BCCP) and then the CO(2) group is transferred by the transcarboxylase to acetyl-CoA to form malonyl-CoA.</text>
</comment>
<comment type="catalytic activity">
    <reaction evidence="1">
        <text>N(6)-carboxybiotinyl-L-lysyl-[protein] + acetyl-CoA = N(6)-biotinyl-L-lysyl-[protein] + malonyl-CoA</text>
        <dbReference type="Rhea" id="RHEA:54728"/>
        <dbReference type="Rhea" id="RHEA-COMP:10505"/>
        <dbReference type="Rhea" id="RHEA-COMP:10506"/>
        <dbReference type="ChEBI" id="CHEBI:57288"/>
        <dbReference type="ChEBI" id="CHEBI:57384"/>
        <dbReference type="ChEBI" id="CHEBI:83144"/>
        <dbReference type="ChEBI" id="CHEBI:83145"/>
        <dbReference type="EC" id="2.1.3.15"/>
    </reaction>
</comment>
<comment type="pathway">
    <text evidence="1">Lipid metabolism; malonyl-CoA biosynthesis; malonyl-CoA from acetyl-CoA: step 1/1.</text>
</comment>
<comment type="subunit">
    <text evidence="1">Acetyl-CoA carboxylase is a heterohexamer composed of biotin carboxyl carrier protein (AccB), biotin carboxylase (AccC) and two subunits each of ACCase subunit alpha (AccA) and ACCase subunit beta (AccD).</text>
</comment>
<comment type="subcellular location">
    <subcellularLocation>
        <location evidence="1">Cytoplasm</location>
    </subcellularLocation>
</comment>
<comment type="similarity">
    <text evidence="1">Belongs to the AccD/PCCB family.</text>
</comment>
<protein>
    <recommendedName>
        <fullName evidence="1">Acetyl-coenzyme A carboxylase carboxyl transferase subunit beta</fullName>
        <shortName evidence="1">ACCase subunit beta</shortName>
        <shortName evidence="1">Acetyl-CoA carboxylase carboxyltransferase subunit beta</shortName>
        <ecNumber evidence="1">2.1.3.15</ecNumber>
    </recommendedName>
</protein>
<gene>
    <name evidence="1" type="primary">accD</name>
    <name type="ordered locus">Mmar10_0089</name>
</gene>
<keyword id="KW-0067">ATP-binding</keyword>
<keyword id="KW-0963">Cytoplasm</keyword>
<keyword id="KW-0275">Fatty acid biosynthesis</keyword>
<keyword id="KW-0276">Fatty acid metabolism</keyword>
<keyword id="KW-0444">Lipid biosynthesis</keyword>
<keyword id="KW-0443">Lipid metabolism</keyword>
<keyword id="KW-0547">Nucleotide-binding</keyword>
<keyword id="KW-1185">Reference proteome</keyword>
<keyword id="KW-0808">Transferase</keyword>
<evidence type="ECO:0000255" key="1">
    <source>
        <dbReference type="HAMAP-Rule" id="MF_01395"/>
    </source>
</evidence>
<evidence type="ECO:0000255" key="2">
    <source>
        <dbReference type="PROSITE-ProRule" id="PRU01136"/>
    </source>
</evidence>
<evidence type="ECO:0000256" key="3">
    <source>
        <dbReference type="SAM" id="MobiDB-lite"/>
    </source>
</evidence>
<dbReference type="EC" id="2.1.3.15" evidence="1"/>
<dbReference type="EMBL" id="CP000449">
    <property type="protein sequence ID" value="ABI64385.1"/>
    <property type="molecule type" value="Genomic_DNA"/>
</dbReference>
<dbReference type="RefSeq" id="WP_011642032.1">
    <property type="nucleotide sequence ID" value="NC_008347.1"/>
</dbReference>
<dbReference type="SMR" id="Q0ATK2"/>
<dbReference type="STRING" id="394221.Mmar10_0089"/>
<dbReference type="KEGG" id="mmr:Mmar10_0089"/>
<dbReference type="eggNOG" id="COG0777">
    <property type="taxonomic scope" value="Bacteria"/>
</dbReference>
<dbReference type="HOGENOM" id="CLU_015486_1_1_5"/>
<dbReference type="OrthoDB" id="9772975at2"/>
<dbReference type="UniPathway" id="UPA00655">
    <property type="reaction ID" value="UER00711"/>
</dbReference>
<dbReference type="Proteomes" id="UP000001964">
    <property type="component" value="Chromosome"/>
</dbReference>
<dbReference type="GO" id="GO:0009329">
    <property type="term" value="C:acetate CoA-transferase complex"/>
    <property type="evidence" value="ECO:0007669"/>
    <property type="project" value="TreeGrafter"/>
</dbReference>
<dbReference type="GO" id="GO:0003989">
    <property type="term" value="F:acetyl-CoA carboxylase activity"/>
    <property type="evidence" value="ECO:0007669"/>
    <property type="project" value="InterPro"/>
</dbReference>
<dbReference type="GO" id="GO:0005524">
    <property type="term" value="F:ATP binding"/>
    <property type="evidence" value="ECO:0007669"/>
    <property type="project" value="UniProtKB-KW"/>
</dbReference>
<dbReference type="GO" id="GO:0016743">
    <property type="term" value="F:carboxyl- or carbamoyltransferase activity"/>
    <property type="evidence" value="ECO:0007669"/>
    <property type="project" value="UniProtKB-UniRule"/>
</dbReference>
<dbReference type="GO" id="GO:0006633">
    <property type="term" value="P:fatty acid biosynthetic process"/>
    <property type="evidence" value="ECO:0007669"/>
    <property type="project" value="UniProtKB-KW"/>
</dbReference>
<dbReference type="GO" id="GO:2001295">
    <property type="term" value="P:malonyl-CoA biosynthetic process"/>
    <property type="evidence" value="ECO:0007669"/>
    <property type="project" value="UniProtKB-UniRule"/>
</dbReference>
<dbReference type="Gene3D" id="3.90.226.10">
    <property type="entry name" value="2-enoyl-CoA Hydratase, Chain A, domain 1"/>
    <property type="match status" value="1"/>
</dbReference>
<dbReference type="HAMAP" id="MF_01395">
    <property type="entry name" value="AcetylCoA_CT_beta"/>
    <property type="match status" value="1"/>
</dbReference>
<dbReference type="InterPro" id="IPR034733">
    <property type="entry name" value="AcCoA_carboxyl_beta"/>
</dbReference>
<dbReference type="InterPro" id="IPR000438">
    <property type="entry name" value="Acetyl_CoA_COase_Trfase_b_su"/>
</dbReference>
<dbReference type="InterPro" id="IPR029045">
    <property type="entry name" value="ClpP/crotonase-like_dom_sf"/>
</dbReference>
<dbReference type="InterPro" id="IPR011762">
    <property type="entry name" value="COA_CT_N"/>
</dbReference>
<dbReference type="NCBIfam" id="TIGR00515">
    <property type="entry name" value="accD"/>
    <property type="match status" value="1"/>
</dbReference>
<dbReference type="PANTHER" id="PTHR42995">
    <property type="entry name" value="ACETYL-COENZYME A CARBOXYLASE CARBOXYL TRANSFERASE SUBUNIT BETA, CHLOROPLASTIC"/>
    <property type="match status" value="1"/>
</dbReference>
<dbReference type="PANTHER" id="PTHR42995:SF5">
    <property type="entry name" value="ACETYL-COENZYME A CARBOXYLASE CARBOXYL TRANSFERASE SUBUNIT BETA, CHLOROPLASTIC"/>
    <property type="match status" value="1"/>
</dbReference>
<dbReference type="Pfam" id="PF01039">
    <property type="entry name" value="Carboxyl_trans"/>
    <property type="match status" value="1"/>
</dbReference>
<dbReference type="PRINTS" id="PR01070">
    <property type="entry name" value="ACCCTRFRASEB"/>
</dbReference>
<dbReference type="SUPFAM" id="SSF52096">
    <property type="entry name" value="ClpP/crotonase"/>
    <property type="match status" value="1"/>
</dbReference>
<dbReference type="PROSITE" id="PS50980">
    <property type="entry name" value="COA_CT_NTER"/>
    <property type="match status" value="1"/>
</dbReference>
<proteinExistence type="inferred from homology"/>